<feature type="chain" id="PRO_0000093898" description="RNA polymerase sigma factor SigA">
    <location>
        <begin position="1"/>
        <end position="416"/>
    </location>
</feature>
<feature type="DNA-binding region" description="H-T-H motif" evidence="1">
    <location>
        <begin position="377"/>
        <end position="396"/>
    </location>
</feature>
<feature type="region of interest" description="Sigma-70 factor domain-2" evidence="1">
    <location>
        <begin position="184"/>
        <end position="254"/>
    </location>
</feature>
<feature type="region of interest" description="Sigma-70 factor domain-3" evidence="1">
    <location>
        <begin position="263"/>
        <end position="338"/>
    </location>
</feature>
<feature type="region of interest" description="Sigma-70 factor domain-4" evidence="1">
    <location>
        <begin position="351"/>
        <end position="404"/>
    </location>
</feature>
<feature type="short sequence motif" description="Interaction with polymerase core subunit RpoC">
    <location>
        <begin position="208"/>
        <end position="211"/>
    </location>
</feature>
<sequence>MMQAHDVLTLTEPPLDLDLIDLDEDFDDEDIELELEETSDSNDGKKTRRLASARRRDAARKKPYTEDSIRIYLQEIGRIRLLRAEEEIELARKIADLLKLERIREDFCLYSDAEWGKQVFLFERIEKIIVEKSEKEPKLSDIKAYLGKTELTAPLLEEWLAKSKEYLSAFKRRLYHGRRAKEKMVQSNLRLVVSIAKKYMNRGLSFQDLIQEGSLGLIRAAEKFDHEKGYKFSTYATWWIRQAITRAIADQSRTIRLPVHLYETISRIKKTTKILSQEMRRKPTEEEIATKMEMTIEKLRFIAKSAQLPISLETPIGKEEDSRLGDFIEADGETPEDEVSKNLLREDLENVLDTLSPRERDVLRLRYGLDDGRMKTLEEIGQIFNVTRERIRQIEAKALRKLRHPNRNSILKEYIR</sequence>
<evidence type="ECO:0000255" key="1">
    <source>
        <dbReference type="HAMAP-Rule" id="MF_00963"/>
    </source>
</evidence>
<accession>P52322</accession>
<comment type="function">
    <text evidence="1">Sigma factors are initiation factors that promote the attachment of RNA polymerase to specific initiation sites and are then released. This sigma factor is the primary sigma factor during exponential growth.</text>
</comment>
<comment type="subunit">
    <text evidence="1">Interacts transiently with the RNA polymerase catalytic core.</text>
</comment>
<comment type="subcellular location">
    <subcellularLocation>
        <location evidence="1">Cytoplasm</location>
    </subcellularLocation>
</comment>
<comment type="similarity">
    <text evidence="1">Belongs to the sigma-70 factor family. RpoD/SigA subfamily.</text>
</comment>
<dbReference type="EMBL" id="D50318">
    <property type="protein sequence ID" value="BAA08853.1"/>
    <property type="molecule type" value="Genomic_DNA"/>
</dbReference>
<dbReference type="EMBL" id="D85684">
    <property type="protein sequence ID" value="BAA12850.1"/>
    <property type="molecule type" value="Genomic_DNA"/>
</dbReference>
<dbReference type="PIR" id="JC4952">
    <property type="entry name" value="JC4952"/>
</dbReference>
<dbReference type="SMR" id="P52322"/>
<dbReference type="GO" id="GO:0005737">
    <property type="term" value="C:cytoplasm"/>
    <property type="evidence" value="ECO:0007669"/>
    <property type="project" value="UniProtKB-SubCell"/>
</dbReference>
<dbReference type="GO" id="GO:0003677">
    <property type="term" value="F:DNA binding"/>
    <property type="evidence" value="ECO:0007669"/>
    <property type="project" value="UniProtKB-UniRule"/>
</dbReference>
<dbReference type="GO" id="GO:0016987">
    <property type="term" value="F:sigma factor activity"/>
    <property type="evidence" value="ECO:0007669"/>
    <property type="project" value="UniProtKB-UniRule"/>
</dbReference>
<dbReference type="GO" id="GO:0006352">
    <property type="term" value="P:DNA-templated transcription initiation"/>
    <property type="evidence" value="ECO:0007669"/>
    <property type="project" value="UniProtKB-UniRule"/>
</dbReference>
<dbReference type="CDD" id="cd06171">
    <property type="entry name" value="Sigma70_r4"/>
    <property type="match status" value="1"/>
</dbReference>
<dbReference type="FunFam" id="1.10.601.10:FF:000001">
    <property type="entry name" value="RNA polymerase sigma factor SigA"/>
    <property type="match status" value="1"/>
</dbReference>
<dbReference type="Gene3D" id="1.10.601.10">
    <property type="entry name" value="RNA Polymerase Primary Sigma Factor"/>
    <property type="match status" value="2"/>
</dbReference>
<dbReference type="Gene3D" id="1.10.10.10">
    <property type="entry name" value="Winged helix-like DNA-binding domain superfamily/Winged helix DNA-binding domain"/>
    <property type="match status" value="2"/>
</dbReference>
<dbReference type="HAMAP" id="MF_00963">
    <property type="entry name" value="Sigma70_RpoD_SigA"/>
    <property type="match status" value="1"/>
</dbReference>
<dbReference type="InterPro" id="IPR014284">
    <property type="entry name" value="RNA_pol_sigma-70_dom"/>
</dbReference>
<dbReference type="InterPro" id="IPR000943">
    <property type="entry name" value="RNA_pol_sigma70"/>
</dbReference>
<dbReference type="InterPro" id="IPR009042">
    <property type="entry name" value="RNA_pol_sigma70_r1_2"/>
</dbReference>
<dbReference type="InterPro" id="IPR007627">
    <property type="entry name" value="RNA_pol_sigma70_r2"/>
</dbReference>
<dbReference type="InterPro" id="IPR007624">
    <property type="entry name" value="RNA_pol_sigma70_r3"/>
</dbReference>
<dbReference type="InterPro" id="IPR007630">
    <property type="entry name" value="RNA_pol_sigma70_r4"/>
</dbReference>
<dbReference type="InterPro" id="IPR013325">
    <property type="entry name" value="RNA_pol_sigma_r2"/>
</dbReference>
<dbReference type="InterPro" id="IPR013324">
    <property type="entry name" value="RNA_pol_sigma_r3/r4-like"/>
</dbReference>
<dbReference type="InterPro" id="IPR017848">
    <property type="entry name" value="RNA_pol_sigma_RpoD/SigA_cyanob"/>
</dbReference>
<dbReference type="InterPro" id="IPR012760">
    <property type="entry name" value="RNA_pol_sigma_RpoD_C"/>
</dbReference>
<dbReference type="InterPro" id="IPR050239">
    <property type="entry name" value="Sigma-70_RNA_pol_init_factors"/>
</dbReference>
<dbReference type="InterPro" id="IPR028630">
    <property type="entry name" value="Sigma70_RpoD"/>
</dbReference>
<dbReference type="InterPro" id="IPR036388">
    <property type="entry name" value="WH-like_DNA-bd_sf"/>
</dbReference>
<dbReference type="NCBIfam" id="NF005643">
    <property type="entry name" value="PRK07406.1"/>
    <property type="match status" value="1"/>
</dbReference>
<dbReference type="NCBIfam" id="TIGR02393">
    <property type="entry name" value="RpoD_Cterm"/>
    <property type="match status" value="1"/>
</dbReference>
<dbReference type="NCBIfam" id="TIGR02997">
    <property type="entry name" value="Sig70-cyanoRpoD"/>
    <property type="match status" value="1"/>
</dbReference>
<dbReference type="NCBIfam" id="TIGR02937">
    <property type="entry name" value="sigma70-ECF"/>
    <property type="match status" value="1"/>
</dbReference>
<dbReference type="PANTHER" id="PTHR30603">
    <property type="entry name" value="RNA POLYMERASE SIGMA FACTOR RPO"/>
    <property type="match status" value="1"/>
</dbReference>
<dbReference type="PANTHER" id="PTHR30603:SF62">
    <property type="entry name" value="RNA POLYMERASE SIGMA FACTOR SIGA"/>
    <property type="match status" value="1"/>
</dbReference>
<dbReference type="Pfam" id="PF00140">
    <property type="entry name" value="Sigma70_r1_2"/>
    <property type="match status" value="1"/>
</dbReference>
<dbReference type="Pfam" id="PF04542">
    <property type="entry name" value="Sigma70_r2"/>
    <property type="match status" value="1"/>
</dbReference>
<dbReference type="Pfam" id="PF04539">
    <property type="entry name" value="Sigma70_r3"/>
    <property type="match status" value="1"/>
</dbReference>
<dbReference type="Pfam" id="PF04545">
    <property type="entry name" value="Sigma70_r4"/>
    <property type="match status" value="1"/>
</dbReference>
<dbReference type="PRINTS" id="PR00046">
    <property type="entry name" value="SIGMA70FCT"/>
</dbReference>
<dbReference type="SUPFAM" id="SSF88946">
    <property type="entry name" value="Sigma2 domain of RNA polymerase sigma factors"/>
    <property type="match status" value="1"/>
</dbReference>
<dbReference type="SUPFAM" id="SSF88659">
    <property type="entry name" value="Sigma3 and sigma4 domains of RNA polymerase sigma factors"/>
    <property type="match status" value="2"/>
</dbReference>
<dbReference type="PROSITE" id="PS00715">
    <property type="entry name" value="SIGMA70_1"/>
    <property type="match status" value="1"/>
</dbReference>
<dbReference type="PROSITE" id="PS00716">
    <property type="entry name" value="SIGMA70_2"/>
    <property type="match status" value="1"/>
</dbReference>
<organism>
    <name type="scientific">Microcystis aeruginosa</name>
    <dbReference type="NCBI Taxonomy" id="1126"/>
    <lineage>
        <taxon>Bacteria</taxon>
        <taxon>Bacillati</taxon>
        <taxon>Cyanobacteriota</taxon>
        <taxon>Cyanophyceae</taxon>
        <taxon>Oscillatoriophycideae</taxon>
        <taxon>Chroococcales</taxon>
        <taxon>Microcystaceae</taxon>
        <taxon>Microcystis</taxon>
    </lineage>
</organism>
<gene>
    <name evidence="1" type="primary">sigA</name>
    <name type="synonym">rpoD1</name>
</gene>
<name>SIGA_MICAE</name>
<reference key="1">
    <citation type="journal article" date="1996" name="Gene">
        <title>Cloning, sequencing and characterization of the gene encoding a principal sigma factor homolog from the cyanobacterium Microcystis aeruginosa K-81.</title>
        <authorList>
            <person name="Asayama M."/>
            <person name="Tanaka K."/>
            <person name="Takahashi H."/>
            <person name="Sato A."/>
            <person name="Aida T."/>
            <person name="Shirai M."/>
        </authorList>
    </citation>
    <scope>NUCLEOTIDE SEQUENCE [GENOMIC DNA]</scope>
    <source>
        <strain>K-81</strain>
    </source>
</reference>
<reference key="2">
    <citation type="journal article" date="1996" name="J. Biochem.">
        <title>The rpoD1 gene product is a principal sigma factor of RNA polymerase in Microcystis aeruginosa K-81.</title>
        <authorList>
            <person name="Asayama M."/>
            <person name="Suzuki H."/>
            <person name="Sato A."/>
            <person name="Aida T."/>
            <person name="Tanaka K."/>
            <person name="Takahashi H."/>
            <person name="Shirai M."/>
        </authorList>
    </citation>
    <scope>NUCLEOTIDE SEQUENCE [GENOMIC DNA]</scope>
    <source>
        <strain>K-81</strain>
    </source>
</reference>
<proteinExistence type="inferred from homology"/>
<protein>
    <recommendedName>
        <fullName evidence="1">RNA polymerase sigma factor SigA</fullName>
    </recommendedName>
</protein>
<keyword id="KW-0963">Cytoplasm</keyword>
<keyword id="KW-0238">DNA-binding</keyword>
<keyword id="KW-0731">Sigma factor</keyword>
<keyword id="KW-0804">Transcription</keyword>
<keyword id="KW-0805">Transcription regulation</keyword>